<dbReference type="EMBL" id="CP000744">
    <property type="protein sequence ID" value="ABR84153.1"/>
    <property type="molecule type" value="Genomic_DNA"/>
</dbReference>
<dbReference type="RefSeq" id="WP_012074719.1">
    <property type="nucleotide sequence ID" value="NC_009656.1"/>
</dbReference>
<dbReference type="SMR" id="A6V1I9"/>
<dbReference type="GeneID" id="77219918"/>
<dbReference type="KEGG" id="pap:PSPA7_1540"/>
<dbReference type="HOGENOM" id="CLU_114306_2_2_6"/>
<dbReference type="Proteomes" id="UP000001582">
    <property type="component" value="Chromosome"/>
</dbReference>
<dbReference type="GO" id="GO:1990904">
    <property type="term" value="C:ribonucleoprotein complex"/>
    <property type="evidence" value="ECO:0007669"/>
    <property type="project" value="UniProtKB-KW"/>
</dbReference>
<dbReference type="GO" id="GO:0005840">
    <property type="term" value="C:ribosome"/>
    <property type="evidence" value="ECO:0007669"/>
    <property type="project" value="UniProtKB-KW"/>
</dbReference>
<dbReference type="GO" id="GO:0003735">
    <property type="term" value="F:structural constituent of ribosome"/>
    <property type="evidence" value="ECO:0007669"/>
    <property type="project" value="InterPro"/>
</dbReference>
<dbReference type="GO" id="GO:0006412">
    <property type="term" value="P:translation"/>
    <property type="evidence" value="ECO:0007669"/>
    <property type="project" value="UniProtKB-UniRule"/>
</dbReference>
<dbReference type="Gene3D" id="4.10.830.30">
    <property type="entry name" value="Ribosomal protein L31"/>
    <property type="match status" value="1"/>
</dbReference>
<dbReference type="HAMAP" id="MF_00502">
    <property type="entry name" value="Ribosomal_bL31_2"/>
    <property type="match status" value="1"/>
</dbReference>
<dbReference type="InterPro" id="IPR034704">
    <property type="entry name" value="Ribosomal_bL28/bL31-like_sf"/>
</dbReference>
<dbReference type="InterPro" id="IPR002150">
    <property type="entry name" value="Ribosomal_bL31"/>
</dbReference>
<dbReference type="InterPro" id="IPR027493">
    <property type="entry name" value="Ribosomal_bL31_B"/>
</dbReference>
<dbReference type="InterPro" id="IPR042105">
    <property type="entry name" value="Ribosomal_bL31_sf"/>
</dbReference>
<dbReference type="NCBIfam" id="TIGR00105">
    <property type="entry name" value="L31"/>
    <property type="match status" value="1"/>
</dbReference>
<dbReference type="NCBIfam" id="NF002462">
    <property type="entry name" value="PRK01678.1"/>
    <property type="match status" value="1"/>
</dbReference>
<dbReference type="PANTHER" id="PTHR33280">
    <property type="entry name" value="50S RIBOSOMAL PROTEIN L31, CHLOROPLASTIC"/>
    <property type="match status" value="1"/>
</dbReference>
<dbReference type="PANTHER" id="PTHR33280:SF1">
    <property type="entry name" value="LARGE RIBOSOMAL SUBUNIT PROTEIN BL31C"/>
    <property type="match status" value="1"/>
</dbReference>
<dbReference type="Pfam" id="PF01197">
    <property type="entry name" value="Ribosomal_L31"/>
    <property type="match status" value="1"/>
</dbReference>
<dbReference type="PRINTS" id="PR01249">
    <property type="entry name" value="RIBOSOMALL31"/>
</dbReference>
<dbReference type="SUPFAM" id="SSF143800">
    <property type="entry name" value="L28p-like"/>
    <property type="match status" value="1"/>
</dbReference>
<dbReference type="PROSITE" id="PS01143">
    <property type="entry name" value="RIBOSOMAL_L31"/>
    <property type="match status" value="1"/>
</dbReference>
<feature type="chain" id="PRO_1000014710" description="Large ribosomal subunit protein bL31B">
    <location>
        <begin position="1"/>
        <end position="87"/>
    </location>
</feature>
<organism>
    <name type="scientific">Pseudomonas paraeruginosa (strain DSM 24068 / PA7)</name>
    <name type="common">Pseudomonas aeruginosa (strain PA7)</name>
    <dbReference type="NCBI Taxonomy" id="381754"/>
    <lineage>
        <taxon>Bacteria</taxon>
        <taxon>Pseudomonadati</taxon>
        <taxon>Pseudomonadota</taxon>
        <taxon>Gammaproteobacteria</taxon>
        <taxon>Pseudomonadales</taxon>
        <taxon>Pseudomonadaceae</taxon>
        <taxon>Pseudomonas</taxon>
        <taxon>Pseudomonas paraeruginosa</taxon>
    </lineage>
</organism>
<name>RL31B_PSEP7</name>
<sequence>MKPGIHPDYRPVLFHDTSADVFFLIGSTAETDKTHTHTDGKTYPYVTLDVSSASHPVYTGEQRKTKSEGRVAGFNKRFAGFVGGKGA</sequence>
<keyword id="KW-0687">Ribonucleoprotein</keyword>
<keyword id="KW-0689">Ribosomal protein</keyword>
<comment type="subunit">
    <text evidence="1">Part of the 50S ribosomal subunit.</text>
</comment>
<comment type="similarity">
    <text evidence="1">Belongs to the bacterial ribosomal protein bL31 family. Type B subfamily.</text>
</comment>
<protein>
    <recommendedName>
        <fullName evidence="1">Large ribosomal subunit protein bL31B</fullName>
    </recommendedName>
    <alternativeName>
        <fullName evidence="2">50S ribosomal protein L31 type B</fullName>
    </alternativeName>
</protein>
<proteinExistence type="inferred from homology"/>
<reference key="1">
    <citation type="submission" date="2007-06" db="EMBL/GenBank/DDBJ databases">
        <authorList>
            <person name="Dodson R.J."/>
            <person name="Harkins D."/>
            <person name="Paulsen I.T."/>
        </authorList>
    </citation>
    <scope>NUCLEOTIDE SEQUENCE [LARGE SCALE GENOMIC DNA]</scope>
    <source>
        <strain>DSM 24068 / PA7</strain>
    </source>
</reference>
<evidence type="ECO:0000255" key="1">
    <source>
        <dbReference type="HAMAP-Rule" id="MF_00502"/>
    </source>
</evidence>
<evidence type="ECO:0000305" key="2"/>
<gene>
    <name evidence="1" type="primary">rpmE2</name>
    <name type="ordered locus">PSPA7_1540</name>
</gene>
<accession>A6V1I9</accession>